<name>EF1A_CALMQ</name>
<comment type="function">
    <text evidence="2">GTP hydrolase that promotes the GTP-dependent binding of aminoacyl-tRNA to the A-site of ribosomes during protein biosynthesis.</text>
</comment>
<comment type="catalytic activity">
    <reaction evidence="2">
        <text>GTP + H2O = GDP + phosphate + H(+)</text>
        <dbReference type="Rhea" id="RHEA:19669"/>
        <dbReference type="ChEBI" id="CHEBI:15377"/>
        <dbReference type="ChEBI" id="CHEBI:15378"/>
        <dbReference type="ChEBI" id="CHEBI:37565"/>
        <dbReference type="ChEBI" id="CHEBI:43474"/>
        <dbReference type="ChEBI" id="CHEBI:58189"/>
        <dbReference type="EC" id="3.6.5.3"/>
    </reaction>
    <physiologicalReaction direction="left-to-right" evidence="2">
        <dbReference type="Rhea" id="RHEA:19670"/>
    </physiologicalReaction>
</comment>
<comment type="subcellular location">
    <subcellularLocation>
        <location evidence="2">Cytoplasm</location>
    </subcellularLocation>
</comment>
<comment type="similarity">
    <text evidence="2">Belongs to the TRAFAC class translation factor GTPase superfamily. Classic translation factor GTPase family. EF-Tu/EF-1A subfamily.</text>
</comment>
<gene>
    <name evidence="2" type="primary">tuf</name>
    <name type="ordered locus">Cmaq_1745</name>
</gene>
<reference key="1">
    <citation type="submission" date="2007-10" db="EMBL/GenBank/DDBJ databases">
        <title>Complete sequence of Caldivirga maquilingensis IC-167.</title>
        <authorList>
            <consortium name="US DOE Joint Genome Institute"/>
            <person name="Copeland A."/>
            <person name="Lucas S."/>
            <person name="Lapidus A."/>
            <person name="Barry K."/>
            <person name="Glavina del Rio T."/>
            <person name="Dalin E."/>
            <person name="Tice H."/>
            <person name="Pitluck S."/>
            <person name="Saunders E."/>
            <person name="Brettin T."/>
            <person name="Bruce D."/>
            <person name="Detter J.C."/>
            <person name="Han C."/>
            <person name="Schmutz J."/>
            <person name="Larimer F."/>
            <person name="Land M."/>
            <person name="Hauser L."/>
            <person name="Kyrpides N."/>
            <person name="Ivanova N."/>
            <person name="Biddle J.F."/>
            <person name="Zhang Z."/>
            <person name="Fitz-Gibbon S.T."/>
            <person name="Lowe T.M."/>
            <person name="Saltikov C."/>
            <person name="House C.H."/>
            <person name="Richardson P."/>
        </authorList>
    </citation>
    <scope>NUCLEOTIDE SEQUENCE [LARGE SCALE GENOMIC DNA]</scope>
    <source>
        <strain>ATCC 700844 / DSM 13496 / JCM 10307 / IC-167</strain>
    </source>
</reference>
<dbReference type="EC" id="3.6.5.3" evidence="2"/>
<dbReference type="EMBL" id="CP000852">
    <property type="protein sequence ID" value="ABW02568.1"/>
    <property type="molecule type" value="Genomic_DNA"/>
</dbReference>
<dbReference type="SMR" id="A8MAJ1"/>
<dbReference type="STRING" id="397948.Cmaq_1745"/>
<dbReference type="KEGG" id="cma:Cmaq_1745"/>
<dbReference type="eggNOG" id="arCOG01561">
    <property type="taxonomic scope" value="Archaea"/>
</dbReference>
<dbReference type="HOGENOM" id="CLU_007265_3_5_2"/>
<dbReference type="Proteomes" id="UP000001137">
    <property type="component" value="Chromosome"/>
</dbReference>
<dbReference type="GO" id="GO:0005737">
    <property type="term" value="C:cytoplasm"/>
    <property type="evidence" value="ECO:0007669"/>
    <property type="project" value="UniProtKB-SubCell"/>
</dbReference>
<dbReference type="GO" id="GO:0005525">
    <property type="term" value="F:GTP binding"/>
    <property type="evidence" value="ECO:0007669"/>
    <property type="project" value="UniProtKB-UniRule"/>
</dbReference>
<dbReference type="GO" id="GO:0003924">
    <property type="term" value="F:GTPase activity"/>
    <property type="evidence" value="ECO:0007669"/>
    <property type="project" value="InterPro"/>
</dbReference>
<dbReference type="GO" id="GO:0003746">
    <property type="term" value="F:translation elongation factor activity"/>
    <property type="evidence" value="ECO:0007669"/>
    <property type="project" value="UniProtKB-UniRule"/>
</dbReference>
<dbReference type="CDD" id="cd01883">
    <property type="entry name" value="EF1_alpha"/>
    <property type="match status" value="1"/>
</dbReference>
<dbReference type="CDD" id="cd03693">
    <property type="entry name" value="EF1_alpha_II"/>
    <property type="match status" value="1"/>
</dbReference>
<dbReference type="CDD" id="cd03705">
    <property type="entry name" value="EF1_alpha_III"/>
    <property type="match status" value="1"/>
</dbReference>
<dbReference type="FunFam" id="2.40.30.10:FF:000005">
    <property type="entry name" value="Elongation factor 1-alpha"/>
    <property type="match status" value="1"/>
</dbReference>
<dbReference type="FunFam" id="2.40.30.10:FF:000020">
    <property type="entry name" value="Translation elongation factor EF-1"/>
    <property type="match status" value="1"/>
</dbReference>
<dbReference type="FunFam" id="3.40.50.300:FF:000204">
    <property type="entry name" value="Translation elongation factor Tu"/>
    <property type="match status" value="1"/>
</dbReference>
<dbReference type="Gene3D" id="3.40.50.300">
    <property type="entry name" value="P-loop containing nucleotide triphosphate hydrolases"/>
    <property type="match status" value="1"/>
</dbReference>
<dbReference type="Gene3D" id="2.40.30.10">
    <property type="entry name" value="Translation factors"/>
    <property type="match status" value="2"/>
</dbReference>
<dbReference type="HAMAP" id="MF_00118_A">
    <property type="entry name" value="EF_Tu_A"/>
    <property type="match status" value="1"/>
</dbReference>
<dbReference type="InterPro" id="IPR004161">
    <property type="entry name" value="EFTu-like_2"/>
</dbReference>
<dbReference type="InterPro" id="IPR029459">
    <property type="entry name" value="EFTU-type"/>
</dbReference>
<dbReference type="InterPro" id="IPR054696">
    <property type="entry name" value="GTP-eEF1A_C"/>
</dbReference>
<dbReference type="InterPro" id="IPR027417">
    <property type="entry name" value="P-loop_NTPase"/>
</dbReference>
<dbReference type="InterPro" id="IPR005225">
    <property type="entry name" value="Small_GTP-bd"/>
</dbReference>
<dbReference type="InterPro" id="IPR000795">
    <property type="entry name" value="T_Tr_GTP-bd_dom"/>
</dbReference>
<dbReference type="InterPro" id="IPR050100">
    <property type="entry name" value="TRAFAC_GTPase_members"/>
</dbReference>
<dbReference type="InterPro" id="IPR009000">
    <property type="entry name" value="Transl_B-barrel_sf"/>
</dbReference>
<dbReference type="InterPro" id="IPR009001">
    <property type="entry name" value="Transl_elong_EF1A/Init_IF2_C"/>
</dbReference>
<dbReference type="InterPro" id="IPR004539">
    <property type="entry name" value="Transl_elong_EF1A_euk/arc"/>
</dbReference>
<dbReference type="NCBIfam" id="TIGR00483">
    <property type="entry name" value="EF-1_alpha"/>
    <property type="match status" value="1"/>
</dbReference>
<dbReference type="NCBIfam" id="NF008969">
    <property type="entry name" value="PRK12317.1"/>
    <property type="match status" value="1"/>
</dbReference>
<dbReference type="NCBIfam" id="TIGR00231">
    <property type="entry name" value="small_GTP"/>
    <property type="match status" value="1"/>
</dbReference>
<dbReference type="PANTHER" id="PTHR23115">
    <property type="entry name" value="TRANSLATION FACTOR"/>
    <property type="match status" value="1"/>
</dbReference>
<dbReference type="Pfam" id="PF22594">
    <property type="entry name" value="GTP-eEF1A_C"/>
    <property type="match status" value="1"/>
</dbReference>
<dbReference type="Pfam" id="PF00009">
    <property type="entry name" value="GTP_EFTU"/>
    <property type="match status" value="1"/>
</dbReference>
<dbReference type="Pfam" id="PF03144">
    <property type="entry name" value="GTP_EFTU_D2"/>
    <property type="match status" value="1"/>
</dbReference>
<dbReference type="Pfam" id="PF14578">
    <property type="entry name" value="GTP_EFTU_D4"/>
    <property type="match status" value="1"/>
</dbReference>
<dbReference type="PRINTS" id="PR00315">
    <property type="entry name" value="ELONGATNFCT"/>
</dbReference>
<dbReference type="SUPFAM" id="SSF50465">
    <property type="entry name" value="EF-Tu/eEF-1alpha/eIF2-gamma C-terminal domain"/>
    <property type="match status" value="1"/>
</dbReference>
<dbReference type="SUPFAM" id="SSF52540">
    <property type="entry name" value="P-loop containing nucleoside triphosphate hydrolases"/>
    <property type="match status" value="1"/>
</dbReference>
<dbReference type="SUPFAM" id="SSF50447">
    <property type="entry name" value="Translation proteins"/>
    <property type="match status" value="1"/>
</dbReference>
<dbReference type="PROSITE" id="PS51722">
    <property type="entry name" value="G_TR_2"/>
    <property type="match status" value="1"/>
</dbReference>
<accession>A8MAJ1</accession>
<evidence type="ECO:0000250" key="1"/>
<evidence type="ECO:0000255" key="2">
    <source>
        <dbReference type="HAMAP-Rule" id="MF_00118"/>
    </source>
</evidence>
<organism>
    <name type="scientific">Caldivirga maquilingensis (strain ATCC 700844 / DSM 13496 / JCM 10307 / IC-167)</name>
    <dbReference type="NCBI Taxonomy" id="397948"/>
    <lineage>
        <taxon>Archaea</taxon>
        <taxon>Thermoproteota</taxon>
        <taxon>Thermoprotei</taxon>
        <taxon>Thermoproteales</taxon>
        <taxon>Thermoproteaceae</taxon>
        <taxon>Caldivirga</taxon>
    </lineage>
</organism>
<keyword id="KW-0963">Cytoplasm</keyword>
<keyword id="KW-0251">Elongation factor</keyword>
<keyword id="KW-0342">GTP-binding</keyword>
<keyword id="KW-0378">Hydrolase</keyword>
<keyword id="KW-0460">Magnesium</keyword>
<keyword id="KW-0479">Metal-binding</keyword>
<keyword id="KW-0547">Nucleotide-binding</keyword>
<keyword id="KW-0648">Protein biosynthesis</keyword>
<keyword id="KW-1185">Reference proteome</keyword>
<protein>
    <recommendedName>
        <fullName evidence="2">Elongation factor 1-alpha</fullName>
        <shortName evidence="2">EF-1-alpha</shortName>
        <ecNumber evidence="2">3.6.5.3</ecNumber>
    </recommendedName>
    <alternativeName>
        <fullName evidence="2">Elongation factor Tu</fullName>
        <shortName evidence="2">EF-Tu</shortName>
    </alternativeName>
</protein>
<proteinExistence type="inferred from homology"/>
<feature type="chain" id="PRO_0000337599" description="Elongation factor 1-alpha">
    <location>
        <begin position="1"/>
        <end position="444"/>
    </location>
</feature>
<feature type="domain" description="tr-type G">
    <location>
        <begin position="14"/>
        <end position="235"/>
    </location>
</feature>
<feature type="region of interest" description="G1" evidence="1">
    <location>
        <begin position="23"/>
        <end position="30"/>
    </location>
</feature>
<feature type="region of interest" description="G2" evidence="1">
    <location>
        <begin position="79"/>
        <end position="83"/>
    </location>
</feature>
<feature type="region of interest" description="G3" evidence="1">
    <location>
        <begin position="100"/>
        <end position="103"/>
    </location>
</feature>
<feature type="region of interest" description="G4" evidence="1">
    <location>
        <begin position="162"/>
        <end position="165"/>
    </location>
</feature>
<feature type="region of interest" description="G5" evidence="1">
    <location>
        <begin position="201"/>
        <end position="203"/>
    </location>
</feature>
<feature type="binding site" evidence="2">
    <location>
        <begin position="23"/>
        <end position="30"/>
    </location>
    <ligand>
        <name>GTP</name>
        <dbReference type="ChEBI" id="CHEBI:37565"/>
    </ligand>
</feature>
<feature type="binding site" evidence="2">
    <location>
        <position position="30"/>
    </location>
    <ligand>
        <name>Mg(2+)</name>
        <dbReference type="ChEBI" id="CHEBI:18420"/>
    </ligand>
</feature>
<feature type="binding site" evidence="2">
    <location>
        <begin position="100"/>
        <end position="104"/>
    </location>
    <ligand>
        <name>GTP</name>
        <dbReference type="ChEBI" id="CHEBI:37565"/>
    </ligand>
</feature>
<feature type="binding site" evidence="2">
    <location>
        <begin position="162"/>
        <end position="165"/>
    </location>
    <ligand>
        <name>GTP</name>
        <dbReference type="ChEBI" id="CHEBI:37565"/>
    </ligand>
</feature>
<sequence>MSIIKNPTESALKKPHLNLAIIGHVDHGKSTLTGRLLLETGYVDEKAFAELEAEAKKLGKEDFKYAWIMDRLKEERERGVTIEAMHVGFETPKYFFTIIDLPGHRDFVKNMIVGASQADAALLVVSARPGEFESGVGPQGQTREHLFLAWTLGIRNLIVAVNKMDVVNYDQKRYEQIKGELSKILKILRYDVNKVPFIPVSAVRGDNIKVKSSNMPWYNGPVLLEALDAIEPPPRPIDKPLRLPIQDVFSITGAGTVITGRVESGVVKVGDTIVALPPAKVGDVRSIETHHMKLEEAKAGDNVGINVRGFERQDLKRGDVVGHLNNPPTVAEEIVARIAVLEHPTTIGVGYTPVMHVHTATVPTQIIELISRLDPATGQTVEQKPQFIKRGDVAMVRLKPLKPVVVERFSDLPALGRFSLRDMGRTVAAGQIIEIKPAKVEIKR</sequence>